<keyword id="KW-0010">Activator</keyword>
<keyword id="KW-0238">DNA-binding</keyword>
<keyword id="KW-0479">Metal-binding</keyword>
<keyword id="KW-0539">Nucleus</keyword>
<keyword id="KW-0597">Phosphoprotein</keyword>
<keyword id="KW-1185">Reference proteome</keyword>
<keyword id="KW-0804">Transcription</keyword>
<keyword id="KW-0805">Transcription regulation</keyword>
<keyword id="KW-0862">Zinc</keyword>
<reference key="1">
    <citation type="journal article" date="1996" name="Mol. Cell. Biol.">
        <title>Isolation and analysis of the yeast TEA1 gene, which encodes a zinc cluster Ty enhancer-binding protein.</title>
        <authorList>
            <person name="Gray W.M."/>
            <person name="Fassler J.S."/>
        </authorList>
    </citation>
    <scope>NUCLEOTIDE SEQUENCE [GENOMIC DNA]</scope>
</reference>
<reference key="2">
    <citation type="journal article" date="1996" name="Yeast">
        <title>Sequence of 29 kb around the PDR10 locus on the right arm of Saccharomyces cerevisiae chromosome XV: similarity to part of chromosome I.</title>
        <authorList>
            <person name="Parle-McDermott A.G."/>
            <person name="Hand N.J."/>
            <person name="Goulding S.E."/>
            <person name="Wolfe K.H."/>
        </authorList>
    </citation>
    <scope>NUCLEOTIDE SEQUENCE [GENOMIC DNA]</scope>
</reference>
<reference key="3">
    <citation type="journal article" date="1997" name="Nature">
        <title>The nucleotide sequence of Saccharomyces cerevisiae chromosome XV.</title>
        <authorList>
            <person name="Dujon B."/>
            <person name="Albermann K."/>
            <person name="Aldea M."/>
            <person name="Alexandraki D."/>
            <person name="Ansorge W."/>
            <person name="Arino J."/>
            <person name="Benes V."/>
            <person name="Bohn C."/>
            <person name="Bolotin-Fukuhara M."/>
            <person name="Bordonne R."/>
            <person name="Boyer J."/>
            <person name="Camasses A."/>
            <person name="Casamayor A."/>
            <person name="Casas C."/>
            <person name="Cheret G."/>
            <person name="Cziepluch C."/>
            <person name="Daignan-Fornier B."/>
            <person name="Dang V.-D."/>
            <person name="de Haan M."/>
            <person name="Delius H."/>
            <person name="Durand P."/>
            <person name="Fairhead C."/>
            <person name="Feldmann H."/>
            <person name="Gaillon L."/>
            <person name="Galisson F."/>
            <person name="Gamo F.-J."/>
            <person name="Gancedo C."/>
            <person name="Goffeau A."/>
            <person name="Goulding S.E."/>
            <person name="Grivell L.A."/>
            <person name="Habbig B."/>
            <person name="Hand N.J."/>
            <person name="Hani J."/>
            <person name="Hattenhorst U."/>
            <person name="Hebling U."/>
            <person name="Hernando Y."/>
            <person name="Herrero E."/>
            <person name="Heumann K."/>
            <person name="Hiesel R."/>
            <person name="Hilger F."/>
            <person name="Hofmann B."/>
            <person name="Hollenberg C.P."/>
            <person name="Hughes B."/>
            <person name="Jauniaux J.-C."/>
            <person name="Kalogeropoulos A."/>
            <person name="Katsoulou C."/>
            <person name="Kordes E."/>
            <person name="Lafuente M.J."/>
            <person name="Landt O."/>
            <person name="Louis E.J."/>
            <person name="Maarse A.C."/>
            <person name="Madania A."/>
            <person name="Mannhaupt G."/>
            <person name="Marck C."/>
            <person name="Martin R.P."/>
            <person name="Mewes H.-W."/>
            <person name="Michaux G."/>
            <person name="Paces V."/>
            <person name="Parle-McDermott A.G."/>
            <person name="Pearson B.M."/>
            <person name="Perrin A."/>
            <person name="Pettersson B."/>
            <person name="Poch O."/>
            <person name="Pohl T.M."/>
            <person name="Poirey R."/>
            <person name="Portetelle D."/>
            <person name="Pujol A."/>
            <person name="Purnelle B."/>
            <person name="Ramezani Rad M."/>
            <person name="Rechmann S."/>
            <person name="Schwager C."/>
            <person name="Schweizer M."/>
            <person name="Sor F."/>
            <person name="Sterky F."/>
            <person name="Tarassov I.A."/>
            <person name="Teodoru C."/>
            <person name="Tettelin H."/>
            <person name="Thierry A."/>
            <person name="Tobiasch E."/>
            <person name="Tzermia M."/>
            <person name="Uhlen M."/>
            <person name="Unseld M."/>
            <person name="Valens M."/>
            <person name="Vandenbol M."/>
            <person name="Vetter I."/>
            <person name="Vlcek C."/>
            <person name="Voet M."/>
            <person name="Volckaert G."/>
            <person name="Voss H."/>
            <person name="Wambutt R."/>
            <person name="Wedler H."/>
            <person name="Wiemann S."/>
            <person name="Winsor B."/>
            <person name="Wolfe K.H."/>
            <person name="Zollner A."/>
            <person name="Zumstein E."/>
            <person name="Kleine K."/>
        </authorList>
    </citation>
    <scope>NUCLEOTIDE SEQUENCE [LARGE SCALE GENOMIC DNA]</scope>
    <source>
        <strain>ATCC 204508 / S288c</strain>
    </source>
</reference>
<reference key="4">
    <citation type="journal article" date="2014" name="G3 (Bethesda)">
        <title>The reference genome sequence of Saccharomyces cerevisiae: Then and now.</title>
        <authorList>
            <person name="Engel S.R."/>
            <person name="Dietrich F.S."/>
            <person name="Fisk D.G."/>
            <person name="Binkley G."/>
            <person name="Balakrishnan R."/>
            <person name="Costanzo M.C."/>
            <person name="Dwight S.S."/>
            <person name="Hitz B.C."/>
            <person name="Karra K."/>
            <person name="Nash R.S."/>
            <person name="Weng S."/>
            <person name="Wong E.D."/>
            <person name="Lloyd P."/>
            <person name="Skrzypek M.S."/>
            <person name="Miyasato S.R."/>
            <person name="Simison M."/>
            <person name="Cherry J.M."/>
        </authorList>
    </citation>
    <scope>GENOME REANNOTATION</scope>
    <source>
        <strain>ATCC 204508 / S288c</strain>
    </source>
</reference>
<reference key="5">
    <citation type="journal article" date="1996" name="Yeast">
        <title>Nucleotide sequence analysis of a 40 kb segment on the right arm of yeast chromosome XV reveals 18 open reading frames including a new pyruvate kinase and three homologues to chromosome I genes.</title>
        <authorList>
            <person name="Purnelle B."/>
            <person name="Goffeau A."/>
        </authorList>
    </citation>
    <scope>NUCLEOTIDE SEQUENCE [GENOMIC DNA] OF 476-759</scope>
    <source>
        <strain>ATCC 90843 / S288c / FY73</strain>
    </source>
</reference>
<reference key="6">
    <citation type="journal article" date="2003" name="Nature">
        <title>Global analysis of protein expression in yeast.</title>
        <authorList>
            <person name="Ghaemmaghami S."/>
            <person name="Huh W.-K."/>
            <person name="Bower K."/>
            <person name="Howson R.W."/>
            <person name="Belle A."/>
            <person name="Dephoure N."/>
            <person name="O'Shea E.K."/>
            <person name="Weissman J.S."/>
        </authorList>
    </citation>
    <scope>LEVEL OF PROTEIN EXPRESSION [LARGE SCALE ANALYSIS]</scope>
</reference>
<reference key="7">
    <citation type="journal article" date="2007" name="Genomics">
        <title>Nine-amino-acid transactivation domain: establishment and prediction utilities.</title>
        <authorList>
            <person name="Piskacek S."/>
            <person name="Gregor M."/>
            <person name="Nemethova M."/>
            <person name="Grabner M."/>
            <person name="Kovarik P."/>
            <person name="Piskacek M."/>
        </authorList>
    </citation>
    <scope>DOMAIN</scope>
</reference>
<reference key="8">
    <citation type="journal article" date="2007" name="J. Proteome Res.">
        <title>Large-scale phosphorylation analysis of alpha-factor-arrested Saccharomyces cerevisiae.</title>
        <authorList>
            <person name="Li X."/>
            <person name="Gerber S.A."/>
            <person name="Rudner A.D."/>
            <person name="Beausoleil S.A."/>
            <person name="Haas W."/>
            <person name="Villen J."/>
            <person name="Elias J.E."/>
            <person name="Gygi S.P."/>
        </authorList>
    </citation>
    <scope>PHOSPHORYLATION [LARGE SCALE ANALYSIS] AT THR-755</scope>
    <scope>IDENTIFICATION BY MASS SPECTROMETRY [LARGE SCALE ANALYSIS]</scope>
    <source>
        <strain>ADR376</strain>
    </source>
</reference>
<reference key="9">
    <citation type="journal article" date="2008" name="Mol. Cell. Proteomics">
        <title>A multidimensional chromatography technology for in-depth phosphoproteome analysis.</title>
        <authorList>
            <person name="Albuquerque C.P."/>
            <person name="Smolka M.B."/>
            <person name="Payne S.H."/>
            <person name="Bafna V."/>
            <person name="Eng J."/>
            <person name="Zhou H."/>
        </authorList>
    </citation>
    <scope>PHOSPHORYLATION [LARGE SCALE ANALYSIS] AT THR-755</scope>
    <scope>IDENTIFICATION BY MASS SPECTROMETRY [LARGE SCALE ANALYSIS]</scope>
</reference>
<reference key="10">
    <citation type="journal article" date="2009" name="Science">
        <title>Global analysis of Cdk1 substrate phosphorylation sites provides insights into evolution.</title>
        <authorList>
            <person name="Holt L.J."/>
            <person name="Tuch B.B."/>
            <person name="Villen J."/>
            <person name="Johnson A.D."/>
            <person name="Gygi S.P."/>
            <person name="Morgan D.O."/>
        </authorList>
    </citation>
    <scope>PHOSPHORYLATION [LARGE SCALE ANALYSIS] AT THR-22 AND THR-755</scope>
    <scope>IDENTIFICATION BY MASS SPECTROMETRY [LARGE SCALE ANALYSIS]</scope>
</reference>
<comment type="function">
    <text>TY1 element enhancer binding protein. Binds to the DNA sequence 5'-TCGGTGGTATTATTCCGA-3'.</text>
</comment>
<comment type="subcellular location">
    <subcellularLocation>
        <location>Nucleus</location>
    </subcellularLocation>
</comment>
<comment type="domain">
    <text evidence="4">The 9aaTAD motif is a transactivation domain present in a large number of yeast and animal transcription factors.</text>
</comment>
<comment type="miscellaneous">
    <text evidence="3">Present with 736 molecules/cell in log phase SD medium.</text>
</comment>
<sequence length="759" mass="86833">MTAPLWPNKNEKNHTVKRALSTDMTSNILSSTNASSNEENSRSSSAANVRSGTGANTLTNGGSTRKRLACTNCRNRRKKCDLGFPCGNCSRLELVCNVNDEDLRKKRYTNKYVKSLESHIAQLETNLKNLVQKIYPDDEQILNRMMVGDVLSALPDSSQVSINYTDQTPSLPIPATRGTFIIENDKVSQPLSSFNQQTEPSTLNSGIFNTQKQNFEESLDDQLLLRRSLTPQGEKKKKPLVKGSLYPEGPVSYKRKHPVKSDSLLPVSSLTAATDPSTFSDGITAGNSVLVNGELKKRISDLKTTVIVRGLNDDNPNSINNDPRILKSLSNFYKWLYPGYFIFVHRESFLYGFFNHSKNNYEDSSYCSVELIYAMCAVGSRLTPDLQEYSEVYYQRSKKTLLQLVFDEQSTARITTVQALFCLAFYELGKGNNQLGWYFSGLAIRVGYDMGFQLDPKVWYVDDNNLQLTQSELEIRSRIYWGCYIADHFICLMLGRTSTLSVSNSTMPESDELPEVNGTEEFRFIGRHVLQISLPLKNLIILSRLVQIFTSKIFIESEDIARKLKYLNTFNSQVYNWRQSLPEFLQWSKTLIENDDVSTDPTISYFWYCYYIVRLTFNKPFIEDSQESETVVIEIIDDLKTLLDNFGKKFGNYTKGNLYQLYSCLLAINCLKKLKEIRSSEQDSWNAQLDFFNHIFYTQLYPAYDLPKKLQEDTELETEQENQMLNQVGNINYTHDFSLSHEIDDLIRELFGVGTPQKL</sequence>
<gene>
    <name type="primary">TEA1</name>
    <name type="ordered locus">YOR337W</name>
    <name type="ORF">O6257</name>
</gene>
<organism>
    <name type="scientific">Saccharomyces cerevisiae (strain ATCC 204508 / S288c)</name>
    <name type="common">Baker's yeast</name>
    <dbReference type="NCBI Taxonomy" id="559292"/>
    <lineage>
        <taxon>Eukaryota</taxon>
        <taxon>Fungi</taxon>
        <taxon>Dikarya</taxon>
        <taxon>Ascomycota</taxon>
        <taxon>Saccharomycotina</taxon>
        <taxon>Saccharomycetes</taxon>
        <taxon>Saccharomycetales</taxon>
        <taxon>Saccharomycetaceae</taxon>
        <taxon>Saccharomyces</taxon>
    </lineage>
</organism>
<proteinExistence type="evidence at protein level"/>
<feature type="chain" id="PRO_0000114982" description="TY1 enhancer activator">
    <location>
        <begin position="1"/>
        <end position="759"/>
    </location>
</feature>
<feature type="DNA-binding region" description="Zn(2)-C6 fungal-type" evidence="1">
    <location>
        <begin position="70"/>
        <end position="96"/>
    </location>
</feature>
<feature type="region of interest" description="Disordered" evidence="2">
    <location>
        <begin position="1"/>
        <end position="61"/>
    </location>
</feature>
<feature type="region of interest" description="Disordered" evidence="2">
    <location>
        <begin position="229"/>
        <end position="254"/>
    </location>
</feature>
<feature type="short sequence motif" description="9aaTAD">
    <location>
        <begin position="744"/>
        <end position="752"/>
    </location>
</feature>
<feature type="compositionally biased region" description="Low complexity" evidence="2">
    <location>
        <begin position="30"/>
        <end position="51"/>
    </location>
</feature>
<feature type="modified residue" description="Phosphothreonine" evidence="8">
    <location>
        <position position="22"/>
    </location>
</feature>
<feature type="modified residue" description="Phosphothreonine" evidence="6 7 8">
    <location>
        <position position="755"/>
    </location>
</feature>
<feature type="sequence conflict" description="In Ref. 1; AAA96753." evidence="5" ref="1">
    <original>SV</original>
    <variation>RL</variation>
    <location>
        <begin position="501"/>
        <end position="502"/>
    </location>
</feature>
<feature type="sequence conflict" description="In Ref. 1; AAA96753." evidence="5" ref="1">
    <original>T</original>
    <variation>A</variation>
    <location>
        <position position="519"/>
    </location>
</feature>
<name>TEA1_YEAST</name>
<protein>
    <recommendedName>
        <fullName>TY1 enhancer activator</fullName>
    </recommendedName>
</protein>
<dbReference type="EMBL" id="U37696">
    <property type="protein sequence ID" value="AAA96753.1"/>
    <property type="molecule type" value="Genomic_DNA"/>
</dbReference>
<dbReference type="EMBL" id="Z49821">
    <property type="protein sequence ID" value="CAA89982.1"/>
    <property type="molecule type" value="Genomic_DNA"/>
</dbReference>
<dbReference type="EMBL" id="X95720">
    <property type="protein sequence ID" value="CAA65025.1"/>
    <property type="molecule type" value="Genomic_DNA"/>
</dbReference>
<dbReference type="EMBL" id="Z75245">
    <property type="protein sequence ID" value="CAA99660.1"/>
    <property type="molecule type" value="Genomic_DNA"/>
</dbReference>
<dbReference type="EMBL" id="Z75246">
    <property type="protein sequence ID" value="CAA99662.1"/>
    <property type="molecule type" value="Genomic_DNA"/>
</dbReference>
<dbReference type="EMBL" id="BK006948">
    <property type="protein sequence ID" value="DAA11098.1"/>
    <property type="molecule type" value="Genomic_DNA"/>
</dbReference>
<dbReference type="PIR" id="S62067">
    <property type="entry name" value="S62067"/>
</dbReference>
<dbReference type="RefSeq" id="NP_014982.3">
    <property type="nucleotide sequence ID" value="NM_001183757.3"/>
</dbReference>
<dbReference type="SMR" id="P47988"/>
<dbReference type="BioGRID" id="34720">
    <property type="interactions" value="95"/>
</dbReference>
<dbReference type="FunCoup" id="P47988">
    <property type="interactions" value="109"/>
</dbReference>
<dbReference type="IntAct" id="P47988">
    <property type="interactions" value="5"/>
</dbReference>
<dbReference type="STRING" id="4932.YOR337W"/>
<dbReference type="iPTMnet" id="P47988"/>
<dbReference type="PaxDb" id="4932-YOR337W"/>
<dbReference type="PeptideAtlas" id="P47988"/>
<dbReference type="EnsemblFungi" id="YOR337W_mRNA">
    <property type="protein sequence ID" value="YOR337W"/>
    <property type="gene ID" value="YOR337W"/>
</dbReference>
<dbReference type="GeneID" id="854515"/>
<dbReference type="KEGG" id="sce:YOR337W"/>
<dbReference type="AGR" id="SGD:S000005864"/>
<dbReference type="SGD" id="S000005864">
    <property type="gene designation" value="TEA1"/>
</dbReference>
<dbReference type="VEuPathDB" id="FungiDB:YOR337W"/>
<dbReference type="eggNOG" id="ENOG502QU3W">
    <property type="taxonomic scope" value="Eukaryota"/>
</dbReference>
<dbReference type="HOGENOM" id="CLU_015811_0_0_1"/>
<dbReference type="InParanoid" id="P47988"/>
<dbReference type="OMA" id="YMADHFI"/>
<dbReference type="OrthoDB" id="2428527at2759"/>
<dbReference type="BioCyc" id="YEAST:G3O-33812-MONOMER"/>
<dbReference type="BioGRID-ORCS" id="854515">
    <property type="hits" value="3 hits in 13 CRISPR screens"/>
</dbReference>
<dbReference type="PRO" id="PR:P47988"/>
<dbReference type="Proteomes" id="UP000002311">
    <property type="component" value="Chromosome XV"/>
</dbReference>
<dbReference type="RNAct" id="P47988">
    <property type="molecule type" value="protein"/>
</dbReference>
<dbReference type="GO" id="GO:0051285">
    <property type="term" value="C:cell cortex of cell tip"/>
    <property type="evidence" value="ECO:0000314"/>
    <property type="project" value="SGD"/>
</dbReference>
<dbReference type="GO" id="GO:0005634">
    <property type="term" value="C:nucleus"/>
    <property type="evidence" value="ECO:0007669"/>
    <property type="project" value="UniProtKB-SubCell"/>
</dbReference>
<dbReference type="GO" id="GO:0003677">
    <property type="term" value="F:DNA binding"/>
    <property type="evidence" value="ECO:0000314"/>
    <property type="project" value="SGD"/>
</dbReference>
<dbReference type="GO" id="GO:0000981">
    <property type="term" value="F:DNA-binding transcription factor activity, RNA polymerase II-specific"/>
    <property type="evidence" value="ECO:0007669"/>
    <property type="project" value="InterPro"/>
</dbReference>
<dbReference type="GO" id="GO:0043565">
    <property type="term" value="F:sequence-specific DNA binding"/>
    <property type="evidence" value="ECO:0007005"/>
    <property type="project" value="SGD"/>
</dbReference>
<dbReference type="GO" id="GO:0008270">
    <property type="term" value="F:zinc ion binding"/>
    <property type="evidence" value="ECO:0007669"/>
    <property type="project" value="InterPro"/>
</dbReference>
<dbReference type="GO" id="GO:0006368">
    <property type="term" value="P:transcription elongation by RNA polymerase II"/>
    <property type="evidence" value="ECO:0000314"/>
    <property type="project" value="SGD"/>
</dbReference>
<dbReference type="CDD" id="cd12148">
    <property type="entry name" value="fungal_TF_MHR"/>
    <property type="match status" value="1"/>
</dbReference>
<dbReference type="CDD" id="cd00067">
    <property type="entry name" value="GAL4"/>
    <property type="match status" value="1"/>
</dbReference>
<dbReference type="Gene3D" id="4.10.240.10">
    <property type="entry name" value="Zn(2)-C6 fungal-type DNA-binding domain"/>
    <property type="match status" value="1"/>
</dbReference>
<dbReference type="InterPro" id="IPR051615">
    <property type="entry name" value="Transcr_Regulatory_Elem"/>
</dbReference>
<dbReference type="InterPro" id="IPR007219">
    <property type="entry name" value="Transcription_factor_dom_fun"/>
</dbReference>
<dbReference type="InterPro" id="IPR036864">
    <property type="entry name" value="Zn2-C6_fun-type_DNA-bd_sf"/>
</dbReference>
<dbReference type="InterPro" id="IPR001138">
    <property type="entry name" value="Zn2Cys6_DnaBD"/>
</dbReference>
<dbReference type="PANTHER" id="PTHR31313">
    <property type="entry name" value="TY1 ENHANCER ACTIVATOR"/>
    <property type="match status" value="1"/>
</dbReference>
<dbReference type="PANTHER" id="PTHR31313:SF81">
    <property type="entry name" value="TY1 ENHANCER ACTIVATOR"/>
    <property type="match status" value="1"/>
</dbReference>
<dbReference type="Pfam" id="PF04082">
    <property type="entry name" value="Fungal_trans"/>
    <property type="match status" value="1"/>
</dbReference>
<dbReference type="Pfam" id="PF00172">
    <property type="entry name" value="Zn_clus"/>
    <property type="match status" value="1"/>
</dbReference>
<dbReference type="SMART" id="SM00906">
    <property type="entry name" value="Fungal_trans"/>
    <property type="match status" value="1"/>
</dbReference>
<dbReference type="SMART" id="SM00066">
    <property type="entry name" value="GAL4"/>
    <property type="match status" value="1"/>
</dbReference>
<dbReference type="SUPFAM" id="SSF57701">
    <property type="entry name" value="Zn2/Cys6 DNA-binding domain"/>
    <property type="match status" value="1"/>
</dbReference>
<dbReference type="PROSITE" id="PS00463">
    <property type="entry name" value="ZN2_CY6_FUNGAL_1"/>
    <property type="match status" value="1"/>
</dbReference>
<dbReference type="PROSITE" id="PS50048">
    <property type="entry name" value="ZN2_CY6_FUNGAL_2"/>
    <property type="match status" value="1"/>
</dbReference>
<accession>P47988</accession>
<accession>D6W332</accession>
<evidence type="ECO:0000255" key="1">
    <source>
        <dbReference type="PROSITE-ProRule" id="PRU00227"/>
    </source>
</evidence>
<evidence type="ECO:0000256" key="2">
    <source>
        <dbReference type="SAM" id="MobiDB-lite"/>
    </source>
</evidence>
<evidence type="ECO:0000269" key="3">
    <source>
    </source>
</evidence>
<evidence type="ECO:0000269" key="4">
    <source>
    </source>
</evidence>
<evidence type="ECO:0000305" key="5"/>
<evidence type="ECO:0007744" key="6">
    <source>
    </source>
</evidence>
<evidence type="ECO:0007744" key="7">
    <source>
    </source>
</evidence>
<evidence type="ECO:0007744" key="8">
    <source>
    </source>
</evidence>